<evidence type="ECO:0000255" key="1">
    <source>
        <dbReference type="HAMAP-Rule" id="MF_01631"/>
    </source>
</evidence>
<gene>
    <name evidence="1" type="primary">glmU</name>
    <name type="ordered locus">GOX0006</name>
</gene>
<proteinExistence type="inferred from homology"/>
<sequence length="444" mass="47242">MTDSTHRTTAIILAAGLGTRMKSRLPKALHRLGNQPMINHLITTARQVFDDVVVVTGPDMPELEKAVRPFKTVTQVERLGTAHAANTARDLFGTGDVAILYADNPLITAETMRRLLAARREGASLALLGMRPAEPGRYGRIVEDHGRVVKIVEFKDATEDERRITLCNAGVMCAGVDDFRTWLANVGNDNAQGEYYLTDVVEMAAKAGPVVCVEAPEAELAGVNSRSELARAEATLQTRLRNAAMDAGVTLVAPETVFFSTDTVIEADVTIEPNVFFGPGVKVRSGALIRAFSHLEGCEVGENAMIGPYARLRPGTLCAAQTHVGNFVELKNVELGEGAKANHLTYLGDASIGSGTNVGAGTITCNYDGVFKHRTTIGERVFVGSDSILVAPVTVGDDALIAAGSVITSDVPPGDLALGRARQTLKSGQGLQIKQSLKARKEQG</sequence>
<name>GLMU_GLUOX</name>
<keyword id="KW-0012">Acyltransferase</keyword>
<keyword id="KW-0133">Cell shape</keyword>
<keyword id="KW-0961">Cell wall biogenesis/degradation</keyword>
<keyword id="KW-0963">Cytoplasm</keyword>
<keyword id="KW-0460">Magnesium</keyword>
<keyword id="KW-0479">Metal-binding</keyword>
<keyword id="KW-0511">Multifunctional enzyme</keyword>
<keyword id="KW-0548">Nucleotidyltransferase</keyword>
<keyword id="KW-0573">Peptidoglycan synthesis</keyword>
<keyword id="KW-1185">Reference proteome</keyword>
<keyword id="KW-0677">Repeat</keyword>
<keyword id="KW-0808">Transferase</keyword>
<protein>
    <recommendedName>
        <fullName evidence="1">Bifunctional protein GlmU</fullName>
    </recommendedName>
    <domain>
        <recommendedName>
            <fullName evidence="1">UDP-N-acetylglucosamine pyrophosphorylase</fullName>
            <ecNumber evidence="1">2.7.7.23</ecNumber>
        </recommendedName>
        <alternativeName>
            <fullName evidence="1">N-acetylglucosamine-1-phosphate uridyltransferase</fullName>
        </alternativeName>
    </domain>
    <domain>
        <recommendedName>
            <fullName evidence="1">Glucosamine-1-phosphate N-acetyltransferase</fullName>
            <ecNumber evidence="1">2.3.1.157</ecNumber>
        </recommendedName>
    </domain>
</protein>
<comment type="function">
    <text evidence="1">Catalyzes the last two sequential reactions in the de novo biosynthetic pathway for UDP-N-acetylglucosamine (UDP-GlcNAc). The C-terminal domain catalyzes the transfer of acetyl group from acetyl coenzyme A to glucosamine-1-phosphate (GlcN-1-P) to produce N-acetylglucosamine-1-phosphate (GlcNAc-1-P), which is converted into UDP-GlcNAc by the transfer of uridine 5-monophosphate (from uridine 5-triphosphate), a reaction catalyzed by the N-terminal domain.</text>
</comment>
<comment type="catalytic activity">
    <reaction evidence="1">
        <text>alpha-D-glucosamine 1-phosphate + acetyl-CoA = N-acetyl-alpha-D-glucosamine 1-phosphate + CoA + H(+)</text>
        <dbReference type="Rhea" id="RHEA:13725"/>
        <dbReference type="ChEBI" id="CHEBI:15378"/>
        <dbReference type="ChEBI" id="CHEBI:57287"/>
        <dbReference type="ChEBI" id="CHEBI:57288"/>
        <dbReference type="ChEBI" id="CHEBI:57776"/>
        <dbReference type="ChEBI" id="CHEBI:58516"/>
        <dbReference type="EC" id="2.3.1.157"/>
    </reaction>
</comment>
<comment type="catalytic activity">
    <reaction evidence="1">
        <text>N-acetyl-alpha-D-glucosamine 1-phosphate + UTP + H(+) = UDP-N-acetyl-alpha-D-glucosamine + diphosphate</text>
        <dbReference type="Rhea" id="RHEA:13509"/>
        <dbReference type="ChEBI" id="CHEBI:15378"/>
        <dbReference type="ChEBI" id="CHEBI:33019"/>
        <dbReference type="ChEBI" id="CHEBI:46398"/>
        <dbReference type="ChEBI" id="CHEBI:57705"/>
        <dbReference type="ChEBI" id="CHEBI:57776"/>
        <dbReference type="EC" id="2.7.7.23"/>
    </reaction>
</comment>
<comment type="cofactor">
    <cofactor evidence="1">
        <name>Mg(2+)</name>
        <dbReference type="ChEBI" id="CHEBI:18420"/>
    </cofactor>
    <text evidence="1">Binds 1 Mg(2+) ion per subunit.</text>
</comment>
<comment type="pathway">
    <text evidence="1">Nucleotide-sugar biosynthesis; UDP-N-acetyl-alpha-D-glucosamine biosynthesis; N-acetyl-alpha-D-glucosamine 1-phosphate from alpha-D-glucosamine 6-phosphate (route II): step 2/2.</text>
</comment>
<comment type="pathway">
    <text evidence="1">Nucleotide-sugar biosynthesis; UDP-N-acetyl-alpha-D-glucosamine biosynthesis; UDP-N-acetyl-alpha-D-glucosamine from N-acetyl-alpha-D-glucosamine 1-phosphate: step 1/1.</text>
</comment>
<comment type="pathway">
    <text evidence="1">Bacterial outer membrane biogenesis; LPS lipid A biosynthesis.</text>
</comment>
<comment type="subunit">
    <text evidence="1">Homotrimer.</text>
</comment>
<comment type="subcellular location">
    <subcellularLocation>
        <location evidence="1">Cytoplasm</location>
    </subcellularLocation>
</comment>
<comment type="similarity">
    <text evidence="1">In the N-terminal section; belongs to the N-acetylglucosamine-1-phosphate uridyltransferase family.</text>
</comment>
<comment type="similarity">
    <text evidence="1">In the C-terminal section; belongs to the transferase hexapeptide repeat family.</text>
</comment>
<feature type="chain" id="PRO_0000233778" description="Bifunctional protein GlmU">
    <location>
        <begin position="1"/>
        <end position="444"/>
    </location>
</feature>
<feature type="region of interest" description="Pyrophosphorylase" evidence="1">
    <location>
        <begin position="1"/>
        <end position="226"/>
    </location>
</feature>
<feature type="region of interest" description="Linker" evidence="1">
    <location>
        <begin position="227"/>
        <end position="247"/>
    </location>
</feature>
<feature type="region of interest" description="N-acetyltransferase" evidence="1">
    <location>
        <begin position="248"/>
        <end position="444"/>
    </location>
</feature>
<feature type="active site" description="Proton acceptor" evidence="1">
    <location>
        <position position="343"/>
    </location>
</feature>
<feature type="binding site" evidence="1">
    <location>
        <begin position="13"/>
        <end position="16"/>
    </location>
    <ligand>
        <name>UDP-N-acetyl-alpha-D-glucosamine</name>
        <dbReference type="ChEBI" id="CHEBI:57705"/>
    </ligand>
</feature>
<feature type="binding site" evidence="1">
    <location>
        <position position="27"/>
    </location>
    <ligand>
        <name>UDP-N-acetyl-alpha-D-glucosamine</name>
        <dbReference type="ChEBI" id="CHEBI:57705"/>
    </ligand>
</feature>
<feature type="binding site" evidence="1">
    <location>
        <position position="75"/>
    </location>
    <ligand>
        <name>UDP-N-acetyl-alpha-D-glucosamine</name>
        <dbReference type="ChEBI" id="CHEBI:57705"/>
    </ligand>
</feature>
<feature type="binding site" evidence="1">
    <location>
        <begin position="80"/>
        <end position="81"/>
    </location>
    <ligand>
        <name>UDP-N-acetyl-alpha-D-glucosamine</name>
        <dbReference type="ChEBI" id="CHEBI:57705"/>
    </ligand>
</feature>
<feature type="binding site" evidence="1">
    <location>
        <position position="103"/>
    </location>
    <ligand>
        <name>Mg(2+)</name>
        <dbReference type="ChEBI" id="CHEBI:18420"/>
    </ligand>
</feature>
<feature type="binding site" evidence="1">
    <location>
        <position position="139"/>
    </location>
    <ligand>
        <name>UDP-N-acetyl-alpha-D-glucosamine</name>
        <dbReference type="ChEBI" id="CHEBI:57705"/>
    </ligand>
</feature>
<feature type="binding site" evidence="1">
    <location>
        <position position="153"/>
    </location>
    <ligand>
        <name>UDP-N-acetyl-alpha-D-glucosamine</name>
        <dbReference type="ChEBI" id="CHEBI:57705"/>
    </ligand>
</feature>
<feature type="binding site" evidence="1">
    <location>
        <position position="168"/>
    </location>
    <ligand>
        <name>UDP-N-acetyl-alpha-D-glucosamine</name>
        <dbReference type="ChEBI" id="CHEBI:57705"/>
    </ligand>
</feature>
<feature type="binding site" evidence="1">
    <location>
        <position position="224"/>
    </location>
    <ligand>
        <name>Mg(2+)</name>
        <dbReference type="ChEBI" id="CHEBI:18420"/>
    </ligand>
</feature>
<feature type="binding site" evidence="1">
    <location>
        <position position="224"/>
    </location>
    <ligand>
        <name>UDP-N-acetyl-alpha-D-glucosamine</name>
        <dbReference type="ChEBI" id="CHEBI:57705"/>
    </ligand>
</feature>
<feature type="binding site" evidence="1">
    <location>
        <position position="313"/>
    </location>
    <ligand>
        <name>UDP-N-acetyl-alpha-D-glucosamine</name>
        <dbReference type="ChEBI" id="CHEBI:57705"/>
    </ligand>
</feature>
<feature type="binding site" evidence="1">
    <location>
        <position position="331"/>
    </location>
    <ligand>
        <name>UDP-N-acetyl-alpha-D-glucosamine</name>
        <dbReference type="ChEBI" id="CHEBI:57705"/>
    </ligand>
</feature>
<feature type="binding site" evidence="1">
    <location>
        <position position="346"/>
    </location>
    <ligand>
        <name>UDP-N-acetyl-alpha-D-glucosamine</name>
        <dbReference type="ChEBI" id="CHEBI:57705"/>
    </ligand>
</feature>
<feature type="binding site" evidence="1">
    <location>
        <position position="357"/>
    </location>
    <ligand>
        <name>UDP-N-acetyl-alpha-D-glucosamine</name>
        <dbReference type="ChEBI" id="CHEBI:57705"/>
    </ligand>
</feature>
<feature type="binding site" evidence="1">
    <location>
        <position position="360"/>
    </location>
    <ligand>
        <name>acetyl-CoA</name>
        <dbReference type="ChEBI" id="CHEBI:57288"/>
    </ligand>
</feature>
<feature type="binding site" evidence="1">
    <location>
        <begin position="366"/>
        <end position="367"/>
    </location>
    <ligand>
        <name>acetyl-CoA</name>
        <dbReference type="ChEBI" id="CHEBI:57288"/>
    </ligand>
</feature>
<feature type="binding site" evidence="1">
    <location>
        <position position="385"/>
    </location>
    <ligand>
        <name>acetyl-CoA</name>
        <dbReference type="ChEBI" id="CHEBI:57288"/>
    </ligand>
</feature>
<feature type="binding site" evidence="1">
    <location>
        <position position="403"/>
    </location>
    <ligand>
        <name>acetyl-CoA</name>
        <dbReference type="ChEBI" id="CHEBI:57288"/>
    </ligand>
</feature>
<feature type="binding site" evidence="1">
    <location>
        <position position="420"/>
    </location>
    <ligand>
        <name>acetyl-CoA</name>
        <dbReference type="ChEBI" id="CHEBI:57288"/>
    </ligand>
</feature>
<reference key="1">
    <citation type="journal article" date="2005" name="Nat. Biotechnol.">
        <title>Complete genome sequence of the acetic acid bacterium Gluconobacter oxydans.</title>
        <authorList>
            <person name="Prust C."/>
            <person name="Hoffmeister M."/>
            <person name="Liesegang H."/>
            <person name="Wiezer A."/>
            <person name="Fricke W.F."/>
            <person name="Ehrenreich A."/>
            <person name="Gottschalk G."/>
            <person name="Deppenmeier U."/>
        </authorList>
    </citation>
    <scope>NUCLEOTIDE SEQUENCE [LARGE SCALE GENOMIC DNA]</scope>
    <source>
        <strain>621H</strain>
    </source>
</reference>
<dbReference type="EC" id="2.7.7.23" evidence="1"/>
<dbReference type="EC" id="2.3.1.157" evidence="1"/>
<dbReference type="EMBL" id="CP000009">
    <property type="protein sequence ID" value="AAW59805.1"/>
    <property type="molecule type" value="Genomic_DNA"/>
</dbReference>
<dbReference type="RefSeq" id="WP_011251609.1">
    <property type="nucleotide sequence ID" value="NC_006677.1"/>
</dbReference>
<dbReference type="SMR" id="Q5FUY6"/>
<dbReference type="STRING" id="290633.GOX0006"/>
<dbReference type="KEGG" id="gox:GOX0006"/>
<dbReference type="eggNOG" id="COG1207">
    <property type="taxonomic scope" value="Bacteria"/>
</dbReference>
<dbReference type="HOGENOM" id="CLU_029499_15_2_5"/>
<dbReference type="UniPathway" id="UPA00113">
    <property type="reaction ID" value="UER00532"/>
</dbReference>
<dbReference type="UniPathway" id="UPA00113">
    <property type="reaction ID" value="UER00533"/>
</dbReference>
<dbReference type="UniPathway" id="UPA00973"/>
<dbReference type="Proteomes" id="UP000006375">
    <property type="component" value="Chromosome"/>
</dbReference>
<dbReference type="GO" id="GO:0005737">
    <property type="term" value="C:cytoplasm"/>
    <property type="evidence" value="ECO:0007669"/>
    <property type="project" value="UniProtKB-SubCell"/>
</dbReference>
<dbReference type="GO" id="GO:0016020">
    <property type="term" value="C:membrane"/>
    <property type="evidence" value="ECO:0007669"/>
    <property type="project" value="GOC"/>
</dbReference>
<dbReference type="GO" id="GO:0019134">
    <property type="term" value="F:glucosamine-1-phosphate N-acetyltransferase activity"/>
    <property type="evidence" value="ECO:0007669"/>
    <property type="project" value="UniProtKB-UniRule"/>
</dbReference>
<dbReference type="GO" id="GO:0000287">
    <property type="term" value="F:magnesium ion binding"/>
    <property type="evidence" value="ECO:0007669"/>
    <property type="project" value="UniProtKB-UniRule"/>
</dbReference>
<dbReference type="GO" id="GO:0003977">
    <property type="term" value="F:UDP-N-acetylglucosamine diphosphorylase activity"/>
    <property type="evidence" value="ECO:0007669"/>
    <property type="project" value="UniProtKB-UniRule"/>
</dbReference>
<dbReference type="GO" id="GO:0000902">
    <property type="term" value="P:cell morphogenesis"/>
    <property type="evidence" value="ECO:0007669"/>
    <property type="project" value="UniProtKB-UniRule"/>
</dbReference>
<dbReference type="GO" id="GO:0071555">
    <property type="term" value="P:cell wall organization"/>
    <property type="evidence" value="ECO:0007669"/>
    <property type="project" value="UniProtKB-KW"/>
</dbReference>
<dbReference type="GO" id="GO:0009245">
    <property type="term" value="P:lipid A biosynthetic process"/>
    <property type="evidence" value="ECO:0007669"/>
    <property type="project" value="UniProtKB-UniRule"/>
</dbReference>
<dbReference type="GO" id="GO:0009252">
    <property type="term" value="P:peptidoglycan biosynthetic process"/>
    <property type="evidence" value="ECO:0007669"/>
    <property type="project" value="UniProtKB-UniRule"/>
</dbReference>
<dbReference type="GO" id="GO:0008360">
    <property type="term" value="P:regulation of cell shape"/>
    <property type="evidence" value="ECO:0007669"/>
    <property type="project" value="UniProtKB-KW"/>
</dbReference>
<dbReference type="GO" id="GO:0006048">
    <property type="term" value="P:UDP-N-acetylglucosamine biosynthetic process"/>
    <property type="evidence" value="ECO:0007669"/>
    <property type="project" value="UniProtKB-UniPathway"/>
</dbReference>
<dbReference type="CDD" id="cd02540">
    <property type="entry name" value="GT2_GlmU_N_bac"/>
    <property type="match status" value="1"/>
</dbReference>
<dbReference type="CDD" id="cd03353">
    <property type="entry name" value="LbH_GlmU_C"/>
    <property type="match status" value="1"/>
</dbReference>
<dbReference type="Gene3D" id="2.160.10.10">
    <property type="entry name" value="Hexapeptide repeat proteins"/>
    <property type="match status" value="1"/>
</dbReference>
<dbReference type="Gene3D" id="3.90.550.10">
    <property type="entry name" value="Spore Coat Polysaccharide Biosynthesis Protein SpsA, Chain A"/>
    <property type="match status" value="1"/>
</dbReference>
<dbReference type="HAMAP" id="MF_01631">
    <property type="entry name" value="GlmU"/>
    <property type="match status" value="1"/>
</dbReference>
<dbReference type="InterPro" id="IPR005882">
    <property type="entry name" value="Bifunctional_GlmU"/>
</dbReference>
<dbReference type="InterPro" id="IPR050065">
    <property type="entry name" value="GlmU-like"/>
</dbReference>
<dbReference type="InterPro" id="IPR038009">
    <property type="entry name" value="GlmU_C_LbH"/>
</dbReference>
<dbReference type="InterPro" id="IPR001451">
    <property type="entry name" value="Hexapep"/>
</dbReference>
<dbReference type="InterPro" id="IPR018357">
    <property type="entry name" value="Hexapep_transf_CS"/>
</dbReference>
<dbReference type="InterPro" id="IPR025877">
    <property type="entry name" value="MobA-like_NTP_Trfase"/>
</dbReference>
<dbReference type="InterPro" id="IPR029044">
    <property type="entry name" value="Nucleotide-diphossugar_trans"/>
</dbReference>
<dbReference type="InterPro" id="IPR011004">
    <property type="entry name" value="Trimer_LpxA-like_sf"/>
</dbReference>
<dbReference type="NCBIfam" id="TIGR01173">
    <property type="entry name" value="glmU"/>
    <property type="match status" value="1"/>
</dbReference>
<dbReference type="NCBIfam" id="NF010933">
    <property type="entry name" value="PRK14353.1"/>
    <property type="match status" value="1"/>
</dbReference>
<dbReference type="PANTHER" id="PTHR43584:SF3">
    <property type="entry name" value="BIFUNCTIONAL PROTEIN GLMU"/>
    <property type="match status" value="1"/>
</dbReference>
<dbReference type="PANTHER" id="PTHR43584">
    <property type="entry name" value="NUCLEOTIDYL TRANSFERASE"/>
    <property type="match status" value="1"/>
</dbReference>
<dbReference type="Pfam" id="PF14602">
    <property type="entry name" value="Hexapep_2"/>
    <property type="match status" value="1"/>
</dbReference>
<dbReference type="Pfam" id="PF12804">
    <property type="entry name" value="NTP_transf_3"/>
    <property type="match status" value="1"/>
</dbReference>
<dbReference type="SUPFAM" id="SSF53448">
    <property type="entry name" value="Nucleotide-diphospho-sugar transferases"/>
    <property type="match status" value="1"/>
</dbReference>
<dbReference type="SUPFAM" id="SSF51161">
    <property type="entry name" value="Trimeric LpxA-like enzymes"/>
    <property type="match status" value="1"/>
</dbReference>
<dbReference type="PROSITE" id="PS00101">
    <property type="entry name" value="HEXAPEP_TRANSFERASES"/>
    <property type="match status" value="1"/>
</dbReference>
<accession>Q5FUY6</accession>
<organism>
    <name type="scientific">Gluconobacter oxydans (strain 621H)</name>
    <name type="common">Gluconobacter suboxydans</name>
    <dbReference type="NCBI Taxonomy" id="290633"/>
    <lineage>
        <taxon>Bacteria</taxon>
        <taxon>Pseudomonadati</taxon>
        <taxon>Pseudomonadota</taxon>
        <taxon>Alphaproteobacteria</taxon>
        <taxon>Acetobacterales</taxon>
        <taxon>Acetobacteraceae</taxon>
        <taxon>Gluconobacter</taxon>
    </lineage>
</organism>